<reference key="1">
    <citation type="journal article" date="1994" name="J. Bacteriol.">
        <title>Characterization of the Vibrio anguillarum fur gene: role in regulation of expression of the FatA outer membrane protein and catechols.</title>
        <authorList>
            <person name="Tolmasky M.E."/>
            <person name="Wertheimer A.M."/>
            <person name="Actis L.A."/>
            <person name="Crosa J.H."/>
        </authorList>
    </citation>
    <scope>NUCLEOTIDE SEQUENCE [GENOMIC DNA]</scope>
    <scope>MUTAGENESIS OF LYS-77</scope>
    <scope>VARIANT GLY-104</scope>
    <source>
        <strain>ATCC 68554 / 775</strain>
    </source>
</reference>
<reference key="2">
    <citation type="submission" date="1994-07" db="EMBL/GenBank/DDBJ databases">
        <authorList>
            <person name="Wertheimer A.M."/>
            <person name="Tolmasky M.E."/>
            <person name="Actis L.A."/>
            <person name="Crosa J.H."/>
        </authorList>
    </citation>
    <scope>NUCLEOTIDE SEQUENCE [GENOMIC DNA]</scope>
    <source>
        <strain>ATCC 68554 / 775 / 775 NR</strain>
        <strain>ATCC 68554 / 775 / 775met9</strain>
    </source>
</reference>
<reference key="3">
    <citation type="journal article" date="2011" name="Infect. Immun.">
        <title>Complete genome sequence of the marine fish pathogen Vibrio anguillarum harboring the pJM1 virulence plasmid and genomic comparison with other virulent strains of V. anguillarum and V. ordalii.</title>
        <authorList>
            <person name="Naka H."/>
            <person name="Dias G.M."/>
            <person name="Thompson C.C."/>
            <person name="Dubay C."/>
            <person name="Thompson F.L."/>
            <person name="Crosa J.H."/>
        </authorList>
    </citation>
    <scope>NUCLEOTIDE SEQUENCE [LARGE SCALE GENOMIC DNA]</scope>
    <source>
        <strain>ATCC 68554 / 775</strain>
    </source>
</reference>
<evidence type="ECO:0000250" key="1"/>
<evidence type="ECO:0000269" key="2">
    <source>
    </source>
</evidence>
<evidence type="ECO:0000305" key="3"/>
<dbReference type="EMBL" id="L19717">
    <property type="protein sequence ID" value="AAA16861.1"/>
    <property type="molecule type" value="Unassigned_DNA"/>
</dbReference>
<dbReference type="EMBL" id="L33344">
    <property type="protein sequence ID" value="AAA27522.1"/>
    <property type="molecule type" value="Genomic_DNA"/>
</dbReference>
<dbReference type="EMBL" id="L33342">
    <property type="protein sequence ID" value="AAA27520.1"/>
    <property type="molecule type" value="Genomic_DNA"/>
</dbReference>
<dbReference type="EMBL" id="CP002284">
    <property type="protein sequence ID" value="AEH32644.1"/>
    <property type="status" value="ALT_INIT"/>
    <property type="molecule type" value="Genomic_DNA"/>
</dbReference>
<dbReference type="PIR" id="A36870">
    <property type="entry name" value="A36870"/>
</dbReference>
<dbReference type="SMR" id="P37736"/>
<dbReference type="KEGG" id="van:VAA_03429"/>
<dbReference type="eggNOG" id="COG0735">
    <property type="taxonomic scope" value="Bacteria"/>
</dbReference>
<dbReference type="HOGENOM" id="CLU_096072_3_3_6"/>
<dbReference type="CollecTF" id="EXPREG_00000a70"/>
<dbReference type="GO" id="GO:0005829">
    <property type="term" value="C:cytosol"/>
    <property type="evidence" value="ECO:0007669"/>
    <property type="project" value="TreeGrafter"/>
</dbReference>
<dbReference type="GO" id="GO:0003700">
    <property type="term" value="F:DNA-binding transcription factor activity"/>
    <property type="evidence" value="ECO:0007669"/>
    <property type="project" value="InterPro"/>
</dbReference>
<dbReference type="GO" id="GO:0000976">
    <property type="term" value="F:transcription cis-regulatory region binding"/>
    <property type="evidence" value="ECO:0007669"/>
    <property type="project" value="TreeGrafter"/>
</dbReference>
<dbReference type="GO" id="GO:0008270">
    <property type="term" value="F:zinc ion binding"/>
    <property type="evidence" value="ECO:0007669"/>
    <property type="project" value="TreeGrafter"/>
</dbReference>
<dbReference type="GO" id="GO:0045892">
    <property type="term" value="P:negative regulation of DNA-templated transcription"/>
    <property type="evidence" value="ECO:0000270"/>
    <property type="project" value="CollecTF"/>
</dbReference>
<dbReference type="GO" id="GO:1900705">
    <property type="term" value="P:negative regulation of siderophore biosynthetic process"/>
    <property type="evidence" value="ECO:0007669"/>
    <property type="project" value="TreeGrafter"/>
</dbReference>
<dbReference type="CDD" id="cd07153">
    <property type="entry name" value="Fur_like"/>
    <property type="match status" value="1"/>
</dbReference>
<dbReference type="FunFam" id="1.10.10.10:FF:000007">
    <property type="entry name" value="Ferric uptake regulation protein"/>
    <property type="match status" value="1"/>
</dbReference>
<dbReference type="FunFam" id="3.30.1490.190:FF:000001">
    <property type="entry name" value="Ferric uptake regulation protein"/>
    <property type="match status" value="1"/>
</dbReference>
<dbReference type="Gene3D" id="3.30.1490.190">
    <property type="match status" value="1"/>
</dbReference>
<dbReference type="Gene3D" id="1.10.10.10">
    <property type="entry name" value="Winged helix-like DNA-binding domain superfamily/Winged helix DNA-binding domain"/>
    <property type="match status" value="1"/>
</dbReference>
<dbReference type="InterPro" id="IPR002481">
    <property type="entry name" value="FUR"/>
</dbReference>
<dbReference type="InterPro" id="IPR043135">
    <property type="entry name" value="Fur_C"/>
</dbReference>
<dbReference type="InterPro" id="IPR036388">
    <property type="entry name" value="WH-like_DNA-bd_sf"/>
</dbReference>
<dbReference type="InterPro" id="IPR036390">
    <property type="entry name" value="WH_DNA-bd_sf"/>
</dbReference>
<dbReference type="NCBIfam" id="NF006999">
    <property type="entry name" value="PRK09462.1"/>
    <property type="match status" value="1"/>
</dbReference>
<dbReference type="PANTHER" id="PTHR33202:SF2">
    <property type="entry name" value="FERRIC UPTAKE REGULATION PROTEIN"/>
    <property type="match status" value="1"/>
</dbReference>
<dbReference type="PANTHER" id="PTHR33202">
    <property type="entry name" value="ZINC UPTAKE REGULATION PROTEIN"/>
    <property type="match status" value="1"/>
</dbReference>
<dbReference type="Pfam" id="PF01475">
    <property type="entry name" value="FUR"/>
    <property type="match status" value="1"/>
</dbReference>
<dbReference type="SUPFAM" id="SSF46785">
    <property type="entry name" value="Winged helix' DNA-binding domain"/>
    <property type="match status" value="1"/>
</dbReference>
<name>FUR_VIBA7</name>
<feature type="chain" id="PRO_0000095584" description="Ferric uptake regulation protein">
    <location>
        <begin position="1"/>
        <end position="149"/>
    </location>
</feature>
<feature type="region of interest" description="DNA-binding" evidence="1">
    <location>
        <begin position="1"/>
        <end position="84"/>
    </location>
</feature>
<feature type="region of interest" description="Dimerization" evidence="1">
    <location>
        <begin position="85"/>
        <end position="142"/>
    </location>
</feature>
<feature type="binding site" evidence="1">
    <location>
        <position position="33"/>
    </location>
    <ligand>
        <name>Zn(2+)</name>
        <dbReference type="ChEBI" id="CHEBI:29105"/>
    </ligand>
</feature>
<feature type="binding site" evidence="1">
    <location>
        <position position="81"/>
    </location>
    <ligand>
        <name>Zn(2+)</name>
        <dbReference type="ChEBI" id="CHEBI:29105"/>
    </ligand>
</feature>
<feature type="binding site" evidence="1">
    <location>
        <position position="87"/>
    </location>
    <ligand>
        <name>Fe cation</name>
        <dbReference type="ChEBI" id="CHEBI:24875"/>
    </ligand>
</feature>
<feature type="binding site" evidence="1">
    <location>
        <position position="89"/>
    </location>
    <ligand>
        <name>Fe cation</name>
        <dbReference type="ChEBI" id="CHEBI:24875"/>
    </ligand>
</feature>
<feature type="binding site" evidence="1">
    <location>
        <position position="90"/>
    </location>
    <ligand>
        <name>Zn(2+)</name>
        <dbReference type="ChEBI" id="CHEBI:29105"/>
    </ligand>
</feature>
<feature type="binding site" evidence="1">
    <location>
        <position position="93"/>
    </location>
    <ligand>
        <name>Zn(2+)</name>
        <dbReference type="ChEBI" id="CHEBI:29105"/>
    </ligand>
</feature>
<feature type="binding site" evidence="1">
    <location>
        <position position="96"/>
    </location>
    <ligand>
        <name>Zn(2+)</name>
        <dbReference type="ChEBI" id="CHEBI:29105"/>
    </ligand>
</feature>
<feature type="binding site" evidence="1">
    <location>
        <position position="101"/>
    </location>
    <ligand>
        <name>Zn(2+)</name>
        <dbReference type="ChEBI" id="CHEBI:29105"/>
    </ligand>
</feature>
<feature type="binding site" evidence="1">
    <location>
        <position position="108"/>
    </location>
    <ligand>
        <name>Fe cation</name>
        <dbReference type="ChEBI" id="CHEBI:24875"/>
    </ligand>
</feature>
<feature type="binding site" evidence="1">
    <location>
        <position position="125"/>
    </location>
    <ligand>
        <name>Fe cation</name>
        <dbReference type="ChEBI" id="CHEBI:24875"/>
    </ligand>
</feature>
<feature type="sequence variant" description="In strain: 775met9." evidence="2">
    <original>D</original>
    <variation>G</variation>
    <location>
        <position position="104"/>
    </location>
</feature>
<feature type="mutagenesis site" description="Impaired regulatory activity." evidence="2">
    <original>K</original>
    <variation>G</variation>
    <location>
        <position position="77"/>
    </location>
</feature>
<comment type="function">
    <text>Fur acts as a repressor, employing Fe(2+) as a cofactor to bind the operator of the iron transport operon. It plays a role in the regulation of expression of the outer membrane protein fatA and synthesis of catechols which are intermediates in the biosynthesis of anguibactin.</text>
</comment>
<comment type="subunit">
    <text evidence="1">Homodimer.</text>
</comment>
<comment type="subcellular location">
    <subcellularLocation>
        <location evidence="1">Cytoplasm</location>
    </subcellularLocation>
</comment>
<comment type="similarity">
    <text evidence="3">Belongs to the Fur family.</text>
</comment>
<comment type="sequence caution" evidence="3">
    <conflict type="erroneous initiation">
        <sequence resource="EMBL-CDS" id="AEH32644"/>
    </conflict>
    <text>Extended N-terminus.</text>
</comment>
<protein>
    <recommendedName>
        <fullName>Ferric uptake regulation protein</fullName>
        <shortName>Ferric uptake regulator</shortName>
    </recommendedName>
</protein>
<organism>
    <name type="scientific">Vibrio anguillarum (strain ATCC 68554 / 775)</name>
    <name type="common">Listonella anguillarum</name>
    <dbReference type="NCBI Taxonomy" id="882102"/>
    <lineage>
        <taxon>Bacteria</taxon>
        <taxon>Pseudomonadati</taxon>
        <taxon>Pseudomonadota</taxon>
        <taxon>Gammaproteobacteria</taxon>
        <taxon>Vibrionales</taxon>
        <taxon>Vibrionaceae</taxon>
        <taxon>Vibrio</taxon>
    </lineage>
</organism>
<sequence length="149" mass="16970">MSDNNQALKDAGLKVTLPRLKILEVLQQPECQHISAEELYKKLIDLGEEIGLATVYRVLNQFDDAGIVTRHHFEGGKSVFELSTQHHHDHLVCLDCGEVIEFSDEVIEQRQREIAEQYNVQLTNHSLYLYGKCADGSCKQNPNAHKSKR</sequence>
<accession>P37736</accession>
<accession>F7YNE5</accession>
<accession>Q56579</accession>
<proteinExistence type="evidence at protein level"/>
<keyword id="KW-0963">Cytoplasm</keyword>
<keyword id="KW-0238">DNA-binding</keyword>
<keyword id="KW-0408">Iron</keyword>
<keyword id="KW-0479">Metal-binding</keyword>
<keyword id="KW-0678">Repressor</keyword>
<keyword id="KW-0804">Transcription</keyword>
<keyword id="KW-0805">Transcription regulation</keyword>
<keyword id="KW-0862">Zinc</keyword>
<gene>
    <name type="primary">fur</name>
    <name type="ordered locus">VAA_03429</name>
</gene>